<protein>
    <recommendedName>
        <fullName evidence="1">Flap endonuclease Xni</fullName>
        <shortName evidence="1">FEN</shortName>
        <ecNumber evidence="1">3.1.-.-</ecNumber>
    </recommendedName>
</protein>
<proteinExistence type="inferred from homology"/>
<sequence length="251" mass="28149">MAAHLLIVDALNLIRRIHAVQGSPCVETCQHALDQLIIHSQPTHAVAVFDDDARSSGWRHQRLPDYKAGRPPMPDDLHNEMPALRAAFEQRGVRCWASDGNEADDLAATLALKVTEAGHQATIVSTDKGYCQLLSPGLRIRDYFQKRWLDAPFIEKEFGVLPRQLPDYWGLAGISSSKVPGVAGIGPKSATQLLIQFQNLEGIYAHLDKVPEKWRKKLETHKEMAFLCRDIARLQTDLHIDGNLQQLRLAR</sequence>
<reference key="1">
    <citation type="journal article" date="2009" name="PLoS ONE">
        <title>Salmonella paratyphi C: genetic divergence from Salmonella choleraesuis and pathogenic convergence with Salmonella typhi.</title>
        <authorList>
            <person name="Liu W.-Q."/>
            <person name="Feng Y."/>
            <person name="Wang Y."/>
            <person name="Zou Q.-H."/>
            <person name="Chen F."/>
            <person name="Guo J.-T."/>
            <person name="Peng Y.-H."/>
            <person name="Jin Y."/>
            <person name="Li Y.-G."/>
            <person name="Hu S.-N."/>
            <person name="Johnston R.N."/>
            <person name="Liu G.-R."/>
            <person name="Liu S.-L."/>
        </authorList>
    </citation>
    <scope>NUCLEOTIDE SEQUENCE [LARGE SCALE GENOMIC DNA]</scope>
    <source>
        <strain>RKS4594</strain>
    </source>
</reference>
<accession>C0PXF9</accession>
<feature type="chain" id="PRO_1000164503" description="Flap endonuclease Xni">
    <location>
        <begin position="1"/>
        <end position="251"/>
    </location>
</feature>
<feature type="domain" description="5'-3' exonuclease" evidence="1">
    <location>
        <begin position="160"/>
        <end position="249"/>
    </location>
</feature>
<feature type="region of interest" description="Interaction with DNA" evidence="1">
    <location>
        <begin position="184"/>
        <end position="189"/>
    </location>
</feature>
<feature type="binding site" evidence="1">
    <location>
        <position position="104"/>
    </location>
    <ligand>
        <name>Mg(2+)</name>
        <dbReference type="ChEBI" id="CHEBI:18420"/>
    </ligand>
</feature>
<feature type="binding site" evidence="1">
    <location>
        <position position="171"/>
    </location>
    <ligand>
        <name>K(+)</name>
        <dbReference type="ChEBI" id="CHEBI:29103"/>
    </ligand>
</feature>
<feature type="binding site" evidence="1">
    <location>
        <position position="172"/>
    </location>
    <ligand>
        <name>K(+)</name>
        <dbReference type="ChEBI" id="CHEBI:29103"/>
    </ligand>
</feature>
<feature type="binding site" evidence="1">
    <location>
        <position position="180"/>
    </location>
    <ligand>
        <name>K(+)</name>
        <dbReference type="ChEBI" id="CHEBI:29103"/>
    </ligand>
</feature>
<feature type="binding site" evidence="1">
    <location>
        <position position="182"/>
    </location>
    <ligand>
        <name>K(+)</name>
        <dbReference type="ChEBI" id="CHEBI:29103"/>
    </ligand>
</feature>
<feature type="binding site" evidence="1">
    <location>
        <position position="185"/>
    </location>
    <ligand>
        <name>K(+)</name>
        <dbReference type="ChEBI" id="CHEBI:29103"/>
    </ligand>
</feature>
<evidence type="ECO:0000255" key="1">
    <source>
        <dbReference type="HAMAP-Rule" id="MF_01192"/>
    </source>
</evidence>
<keyword id="KW-0238">DNA-binding</keyword>
<keyword id="KW-0255">Endonuclease</keyword>
<keyword id="KW-0378">Hydrolase</keyword>
<keyword id="KW-0460">Magnesium</keyword>
<keyword id="KW-0479">Metal-binding</keyword>
<keyword id="KW-0540">Nuclease</keyword>
<keyword id="KW-0630">Potassium</keyword>
<organism>
    <name type="scientific">Salmonella paratyphi C (strain RKS4594)</name>
    <dbReference type="NCBI Taxonomy" id="476213"/>
    <lineage>
        <taxon>Bacteria</taxon>
        <taxon>Pseudomonadati</taxon>
        <taxon>Pseudomonadota</taxon>
        <taxon>Gammaproteobacteria</taxon>
        <taxon>Enterobacterales</taxon>
        <taxon>Enterobacteriaceae</taxon>
        <taxon>Salmonella</taxon>
    </lineage>
</organism>
<gene>
    <name evidence="1" type="primary">xni</name>
    <name evidence="1" type="synonym">ygdG</name>
    <name type="ordered locus">SPC_3029</name>
</gene>
<name>XNI_SALPC</name>
<dbReference type="EC" id="3.1.-.-" evidence="1"/>
<dbReference type="EMBL" id="CP000857">
    <property type="protein sequence ID" value="ACN47117.1"/>
    <property type="molecule type" value="Genomic_DNA"/>
</dbReference>
<dbReference type="SMR" id="C0PXF9"/>
<dbReference type="KEGG" id="sei:SPC_3029"/>
<dbReference type="HOGENOM" id="CLU_004675_1_2_6"/>
<dbReference type="Proteomes" id="UP000001599">
    <property type="component" value="Chromosome"/>
</dbReference>
<dbReference type="GO" id="GO:0008409">
    <property type="term" value="F:5'-3' exonuclease activity"/>
    <property type="evidence" value="ECO:0007669"/>
    <property type="project" value="InterPro"/>
</dbReference>
<dbReference type="GO" id="GO:0017108">
    <property type="term" value="F:5'-flap endonuclease activity"/>
    <property type="evidence" value="ECO:0007669"/>
    <property type="project" value="UniProtKB-UniRule"/>
</dbReference>
<dbReference type="GO" id="GO:0003677">
    <property type="term" value="F:DNA binding"/>
    <property type="evidence" value="ECO:0007669"/>
    <property type="project" value="UniProtKB-UniRule"/>
</dbReference>
<dbReference type="GO" id="GO:0000287">
    <property type="term" value="F:magnesium ion binding"/>
    <property type="evidence" value="ECO:0007669"/>
    <property type="project" value="UniProtKB-UniRule"/>
</dbReference>
<dbReference type="GO" id="GO:0030955">
    <property type="term" value="F:potassium ion binding"/>
    <property type="evidence" value="ECO:0007669"/>
    <property type="project" value="UniProtKB-UniRule"/>
</dbReference>
<dbReference type="GO" id="GO:0033567">
    <property type="term" value="P:DNA replication, Okazaki fragment processing"/>
    <property type="evidence" value="ECO:0007669"/>
    <property type="project" value="UniProtKB-UniRule"/>
</dbReference>
<dbReference type="CDD" id="cd09898">
    <property type="entry name" value="H3TH_53EXO"/>
    <property type="match status" value="1"/>
</dbReference>
<dbReference type="CDD" id="cd09859">
    <property type="entry name" value="PIN_53EXO"/>
    <property type="match status" value="1"/>
</dbReference>
<dbReference type="FunFam" id="1.10.150.20:FF:000003">
    <property type="entry name" value="DNA polymerase I"/>
    <property type="match status" value="1"/>
</dbReference>
<dbReference type="FunFam" id="3.40.50.1010:FF:000011">
    <property type="entry name" value="Flap endonuclease Xni"/>
    <property type="match status" value="1"/>
</dbReference>
<dbReference type="Gene3D" id="1.10.150.20">
    <property type="entry name" value="5' to 3' exonuclease, C-terminal subdomain"/>
    <property type="match status" value="1"/>
</dbReference>
<dbReference type="Gene3D" id="3.40.50.1010">
    <property type="entry name" value="5'-nuclease"/>
    <property type="match status" value="1"/>
</dbReference>
<dbReference type="HAMAP" id="MF_01192">
    <property type="entry name" value="Xni"/>
    <property type="match status" value="1"/>
</dbReference>
<dbReference type="InterPro" id="IPR020046">
    <property type="entry name" value="5-3_exonucl_a-hlix_arch_N"/>
</dbReference>
<dbReference type="InterPro" id="IPR002421">
    <property type="entry name" value="5-3_exonuclease"/>
</dbReference>
<dbReference type="InterPro" id="IPR036279">
    <property type="entry name" value="5-3_exonuclease_C_sf"/>
</dbReference>
<dbReference type="InterPro" id="IPR020045">
    <property type="entry name" value="DNA_polI_H3TH"/>
</dbReference>
<dbReference type="InterPro" id="IPR038969">
    <property type="entry name" value="FEN"/>
</dbReference>
<dbReference type="InterPro" id="IPR008918">
    <property type="entry name" value="HhH2"/>
</dbReference>
<dbReference type="InterPro" id="IPR029060">
    <property type="entry name" value="PIN-like_dom_sf"/>
</dbReference>
<dbReference type="InterPro" id="IPR022895">
    <property type="entry name" value="Xni"/>
</dbReference>
<dbReference type="NCBIfam" id="NF007017">
    <property type="entry name" value="PRK09482.1"/>
    <property type="match status" value="1"/>
</dbReference>
<dbReference type="PANTHER" id="PTHR42646:SF2">
    <property type="entry name" value="5'-3' EXONUCLEASE FAMILY PROTEIN"/>
    <property type="match status" value="1"/>
</dbReference>
<dbReference type="PANTHER" id="PTHR42646">
    <property type="entry name" value="FLAP ENDONUCLEASE XNI"/>
    <property type="match status" value="1"/>
</dbReference>
<dbReference type="Pfam" id="PF01367">
    <property type="entry name" value="5_3_exonuc"/>
    <property type="match status" value="1"/>
</dbReference>
<dbReference type="Pfam" id="PF02739">
    <property type="entry name" value="5_3_exonuc_N"/>
    <property type="match status" value="1"/>
</dbReference>
<dbReference type="SMART" id="SM00475">
    <property type="entry name" value="53EXOc"/>
    <property type="match status" value="1"/>
</dbReference>
<dbReference type="SMART" id="SM00279">
    <property type="entry name" value="HhH2"/>
    <property type="match status" value="1"/>
</dbReference>
<dbReference type="SUPFAM" id="SSF47807">
    <property type="entry name" value="5' to 3' exonuclease, C-terminal subdomain"/>
    <property type="match status" value="1"/>
</dbReference>
<dbReference type="SUPFAM" id="SSF88723">
    <property type="entry name" value="PIN domain-like"/>
    <property type="match status" value="1"/>
</dbReference>
<comment type="function">
    <text evidence="1">Has flap endonuclease activity. During DNA replication, flap endonucleases cleave the 5'-overhanging flap structure that is generated by displacement synthesis when DNA polymerase encounters the 5'-end of a downstream Okazaki fragment.</text>
</comment>
<comment type="cofactor">
    <cofactor evidence="1">
        <name>Mg(2+)</name>
        <dbReference type="ChEBI" id="CHEBI:18420"/>
    </cofactor>
    <text evidence="1">Binds 2 Mg(2+) per subunit. Only one magnesium ion has a direct interaction with the protein, the other interactions are indirect.</text>
</comment>
<comment type="cofactor">
    <cofactor evidence="1">
        <name>K(+)</name>
        <dbReference type="ChEBI" id="CHEBI:29103"/>
    </cofactor>
    <text evidence="1">Binds 1 K(+) per subunit. The potassium ion strongly increases the affinity for DNA.</text>
</comment>
<comment type="similarity">
    <text evidence="1">Belongs to the Xni family.</text>
</comment>